<accession>Q9SGD1</accession>
<evidence type="ECO:0000250" key="1">
    <source>
        <dbReference type="UniProtKB" id="Q8VWG3"/>
    </source>
</evidence>
<evidence type="ECO:0000255" key="2">
    <source>
        <dbReference type="PROSITE-ProRule" id="PRU00042"/>
    </source>
</evidence>
<evidence type="ECO:0000269" key="3">
    <source>
    </source>
</evidence>
<evidence type="ECO:0000303" key="4">
    <source>
    </source>
</evidence>
<evidence type="ECO:0000303" key="5">
    <source>
    </source>
</evidence>
<evidence type="ECO:0000305" key="6"/>
<evidence type="ECO:0000305" key="7">
    <source>
    </source>
</evidence>
<evidence type="ECO:0000312" key="8">
    <source>
        <dbReference type="Araport" id="AT1G08290"/>
    </source>
</evidence>
<evidence type="ECO:0000312" key="9">
    <source>
        <dbReference type="EMBL" id="AAF18247.1"/>
    </source>
</evidence>
<keyword id="KW-0479">Metal-binding</keyword>
<keyword id="KW-0539">Nucleus</keyword>
<keyword id="KW-1185">Reference proteome</keyword>
<keyword id="KW-0677">Repeat</keyword>
<keyword id="KW-0804">Transcription</keyword>
<keyword id="KW-0805">Transcription regulation</keyword>
<keyword id="KW-0862">Zinc</keyword>
<keyword id="KW-0863">Zinc-finger</keyword>
<reference key="1">
    <citation type="journal article" date="2002" name="Genes Dev.">
        <title>A. thaliana TRANSPARENT TESTA 1 is involved in seed coat development and defines the WIP subfamily of plant zinc finger proteins.</title>
        <authorList>
            <person name="Sagasser M."/>
            <person name="Lu G.-H."/>
            <person name="Hahlbrock K."/>
            <person name="Weisshaar B."/>
        </authorList>
    </citation>
    <scope>NUCLEOTIDE SEQUENCE [MRNA]</scope>
    <source>
        <strain>cv. Columbia</strain>
    </source>
</reference>
<reference key="2">
    <citation type="journal article" date="2000" name="Nature">
        <title>Sequence and analysis of chromosome 1 of the plant Arabidopsis thaliana.</title>
        <authorList>
            <person name="Theologis A."/>
            <person name="Ecker J.R."/>
            <person name="Palm C.J."/>
            <person name="Federspiel N.A."/>
            <person name="Kaul S."/>
            <person name="White O."/>
            <person name="Alonso J."/>
            <person name="Altafi H."/>
            <person name="Araujo R."/>
            <person name="Bowman C.L."/>
            <person name="Brooks S.Y."/>
            <person name="Buehler E."/>
            <person name="Chan A."/>
            <person name="Chao Q."/>
            <person name="Chen H."/>
            <person name="Cheuk R.F."/>
            <person name="Chin C.W."/>
            <person name="Chung M.K."/>
            <person name="Conn L."/>
            <person name="Conway A.B."/>
            <person name="Conway A.R."/>
            <person name="Creasy T.H."/>
            <person name="Dewar K."/>
            <person name="Dunn P."/>
            <person name="Etgu P."/>
            <person name="Feldblyum T.V."/>
            <person name="Feng J.-D."/>
            <person name="Fong B."/>
            <person name="Fujii C.Y."/>
            <person name="Gill J.E."/>
            <person name="Goldsmith A.D."/>
            <person name="Haas B."/>
            <person name="Hansen N.F."/>
            <person name="Hughes B."/>
            <person name="Huizar L."/>
            <person name="Hunter J.L."/>
            <person name="Jenkins J."/>
            <person name="Johnson-Hopson C."/>
            <person name="Khan S."/>
            <person name="Khaykin E."/>
            <person name="Kim C.J."/>
            <person name="Koo H.L."/>
            <person name="Kremenetskaia I."/>
            <person name="Kurtz D.B."/>
            <person name="Kwan A."/>
            <person name="Lam B."/>
            <person name="Langin-Hooper S."/>
            <person name="Lee A."/>
            <person name="Lee J.M."/>
            <person name="Lenz C.A."/>
            <person name="Li J.H."/>
            <person name="Li Y.-P."/>
            <person name="Lin X."/>
            <person name="Liu S.X."/>
            <person name="Liu Z.A."/>
            <person name="Luros J.S."/>
            <person name="Maiti R."/>
            <person name="Marziali A."/>
            <person name="Militscher J."/>
            <person name="Miranda M."/>
            <person name="Nguyen M."/>
            <person name="Nierman W.C."/>
            <person name="Osborne B.I."/>
            <person name="Pai G."/>
            <person name="Peterson J."/>
            <person name="Pham P.K."/>
            <person name="Rizzo M."/>
            <person name="Rooney T."/>
            <person name="Rowley D."/>
            <person name="Sakano H."/>
            <person name="Salzberg S.L."/>
            <person name="Schwartz J.R."/>
            <person name="Shinn P."/>
            <person name="Southwick A.M."/>
            <person name="Sun H."/>
            <person name="Tallon L.J."/>
            <person name="Tambunga G."/>
            <person name="Toriumi M.J."/>
            <person name="Town C.D."/>
            <person name="Utterback T."/>
            <person name="Van Aken S."/>
            <person name="Vaysberg M."/>
            <person name="Vysotskaia V.S."/>
            <person name="Walker M."/>
            <person name="Wu D."/>
            <person name="Yu G."/>
            <person name="Fraser C.M."/>
            <person name="Venter J.C."/>
            <person name="Davis R.W."/>
        </authorList>
    </citation>
    <scope>NUCLEOTIDE SEQUENCE [LARGE SCALE GENOMIC DNA]</scope>
    <source>
        <strain>cv. Columbia</strain>
    </source>
</reference>
<reference key="3">
    <citation type="journal article" date="2017" name="Plant J.">
        <title>Araport11: a complete reannotation of the Arabidopsis thaliana reference genome.</title>
        <authorList>
            <person name="Cheng C.Y."/>
            <person name="Krishnakumar V."/>
            <person name="Chan A.P."/>
            <person name="Thibaud-Nissen F."/>
            <person name="Schobel S."/>
            <person name="Town C.D."/>
        </authorList>
    </citation>
    <scope>GENOME REANNOTATION</scope>
    <source>
        <strain>cv. Columbia</strain>
    </source>
</reference>
<reference key="4">
    <citation type="journal article" date="2002" name="Science">
        <title>Functional annotation of a full-length Arabidopsis cDNA collection.</title>
        <authorList>
            <person name="Seki M."/>
            <person name="Narusaka M."/>
            <person name="Kamiya A."/>
            <person name="Ishida J."/>
            <person name="Satou M."/>
            <person name="Sakurai T."/>
            <person name="Nakajima M."/>
            <person name="Enju A."/>
            <person name="Akiyama K."/>
            <person name="Oono Y."/>
            <person name="Muramatsu M."/>
            <person name="Hayashizaki Y."/>
            <person name="Kawai J."/>
            <person name="Carninci P."/>
            <person name="Itoh M."/>
            <person name="Ishii Y."/>
            <person name="Arakawa T."/>
            <person name="Shibata K."/>
            <person name="Shinagawa A."/>
            <person name="Shinozaki K."/>
        </authorList>
    </citation>
    <scope>NUCLEOTIDE SEQUENCE [LARGE SCALE MRNA]</scope>
    <source>
        <strain>cv. Columbia</strain>
    </source>
</reference>
<reference key="5">
    <citation type="journal article" date="2003" name="Science">
        <title>Empirical analysis of transcriptional activity in the Arabidopsis genome.</title>
        <authorList>
            <person name="Yamada K."/>
            <person name="Lim J."/>
            <person name="Dale J.M."/>
            <person name="Chen H."/>
            <person name="Shinn P."/>
            <person name="Palm C.J."/>
            <person name="Southwick A.M."/>
            <person name="Wu H.C."/>
            <person name="Kim C.J."/>
            <person name="Nguyen M."/>
            <person name="Pham P.K."/>
            <person name="Cheuk R.F."/>
            <person name="Karlin-Newmann G."/>
            <person name="Liu S.X."/>
            <person name="Lam B."/>
            <person name="Sakano H."/>
            <person name="Wu T."/>
            <person name="Yu G."/>
            <person name="Miranda M."/>
            <person name="Quach H.L."/>
            <person name="Tripp M."/>
            <person name="Chang C.H."/>
            <person name="Lee J.M."/>
            <person name="Toriumi M.J."/>
            <person name="Chan M.M."/>
            <person name="Tang C.C."/>
            <person name="Onodera C.S."/>
            <person name="Deng J.M."/>
            <person name="Akiyama K."/>
            <person name="Ansari Y."/>
            <person name="Arakawa T."/>
            <person name="Banh J."/>
            <person name="Banno F."/>
            <person name="Bowser L."/>
            <person name="Brooks S.Y."/>
            <person name="Carninci P."/>
            <person name="Chao Q."/>
            <person name="Choy N."/>
            <person name="Enju A."/>
            <person name="Goldsmith A.D."/>
            <person name="Gurjal M."/>
            <person name="Hansen N.F."/>
            <person name="Hayashizaki Y."/>
            <person name="Johnson-Hopson C."/>
            <person name="Hsuan V.W."/>
            <person name="Iida K."/>
            <person name="Karnes M."/>
            <person name="Khan S."/>
            <person name="Koesema E."/>
            <person name="Ishida J."/>
            <person name="Jiang P.X."/>
            <person name="Jones T."/>
            <person name="Kawai J."/>
            <person name="Kamiya A."/>
            <person name="Meyers C."/>
            <person name="Nakajima M."/>
            <person name="Narusaka M."/>
            <person name="Seki M."/>
            <person name="Sakurai T."/>
            <person name="Satou M."/>
            <person name="Tamse R."/>
            <person name="Vaysberg M."/>
            <person name="Wallender E.K."/>
            <person name="Wong C."/>
            <person name="Yamamura Y."/>
            <person name="Yuan S."/>
            <person name="Shinozaki K."/>
            <person name="Davis R.W."/>
            <person name="Theologis A."/>
            <person name="Ecker J.R."/>
        </authorList>
    </citation>
    <scope>NUCLEOTIDE SEQUENCE [LARGE SCALE MRNA]</scope>
    <source>
        <strain>cv. Columbia</strain>
    </source>
</reference>
<reference key="6">
    <citation type="journal article" date="2010" name="FEBS Lett.">
        <title>Weird fingers: functional analysis of WIP domain proteins.</title>
        <authorList>
            <person name="Appelhagen I."/>
            <person name="Huep G."/>
            <person name="Lu G.H."/>
            <person name="Strompen G."/>
            <person name="Weisshaar B."/>
            <person name="Sagasser M."/>
        </authorList>
    </citation>
    <scope>SUBCELLULAR LOCATION</scope>
    <scope>ZINC-FINGER</scope>
</reference>
<feature type="chain" id="PRO_0000431317" description="Zinc finger protein WIP3">
    <location>
        <begin position="1"/>
        <end position="337"/>
    </location>
</feature>
<feature type="zinc finger region" description="C2H2-type 1" evidence="2">
    <location>
        <begin position="180"/>
        <end position="202"/>
    </location>
</feature>
<feature type="zinc finger region" description="C2H2-type 2; atypical" evidence="5">
    <location>
        <begin position="228"/>
        <end position="260"/>
    </location>
</feature>
<feature type="zinc finger region" description="C2H2-type 3; atypical" evidence="5">
    <location>
        <begin position="265"/>
        <end position="287"/>
    </location>
</feature>
<feature type="zinc finger region" description="C2H2-type 4; atypical" evidence="5">
    <location>
        <begin position="291"/>
        <end position="316"/>
    </location>
</feature>
<feature type="short sequence motif" description="Nuclear localization signal" evidence="1">
    <location>
        <begin position="257"/>
        <end position="260"/>
    </location>
</feature>
<feature type="short sequence motif" description="Nuclear localization signal" evidence="1">
    <location>
        <begin position="300"/>
        <end position="303"/>
    </location>
</feature>
<name>ZWIP3_ARATH</name>
<sequence>MNSYETKGLSFESPSFIEWLKPQSSTTSSKSVLYRGKTRDAISRSNHHQSQMNMLERSLFLYQPQEPLNTSIQCLPLLNKLMENNSQASDIKEENKDDVVTLQIGFPKYHRGSSEDGSDITFDHQKKPIKREIIEDGVVMMKKRRKMKFDEEIIDSDVEVCGKRFWIPSPAQIHVGPMQFACSICSKTFNRYNNMQMHMWGHGSEFRKGADSLKGTIQPAAILRLPCYCCAEGCKNNINHPRSKPLKDFRTLQTHYKRKHGSKPFSCGKCGKALAVKGDWRTHEKNCGKLWYCTCGSDFKHKRSLKDHIRSFGSGHSPHPSLLFDGFEEDTECVTTE</sequence>
<proteinExistence type="evidence at transcript level"/>
<comment type="function">
    <text evidence="7">Probable transcriptional regulator.</text>
</comment>
<comment type="subcellular location">
    <subcellularLocation>
        <location evidence="3">Nucleus</location>
    </subcellularLocation>
</comment>
<comment type="similarity">
    <text evidence="6">Belongs to the WIP C2H2-type zinc-finger protein family.</text>
</comment>
<gene>
    <name evidence="4" type="primary">WIP3</name>
    <name evidence="8" type="ordered locus">At1g08290</name>
    <name evidence="9" type="ORF">T23G18.15</name>
</gene>
<organism>
    <name type="scientific">Arabidopsis thaliana</name>
    <name type="common">Mouse-ear cress</name>
    <dbReference type="NCBI Taxonomy" id="3702"/>
    <lineage>
        <taxon>Eukaryota</taxon>
        <taxon>Viridiplantae</taxon>
        <taxon>Streptophyta</taxon>
        <taxon>Embryophyta</taxon>
        <taxon>Tracheophyta</taxon>
        <taxon>Spermatophyta</taxon>
        <taxon>Magnoliopsida</taxon>
        <taxon>eudicotyledons</taxon>
        <taxon>Gunneridae</taxon>
        <taxon>Pentapetalae</taxon>
        <taxon>rosids</taxon>
        <taxon>malvids</taxon>
        <taxon>Brassicales</taxon>
        <taxon>Brassicaceae</taxon>
        <taxon>Camelineae</taxon>
        <taxon>Arabidopsis</taxon>
    </lineage>
</organism>
<dbReference type="EMBL" id="AF254448">
    <property type="protein sequence ID" value="AAL55723.1"/>
    <property type="molecule type" value="mRNA"/>
</dbReference>
<dbReference type="EMBL" id="AC011438">
    <property type="protein sequence ID" value="AAF18247.1"/>
    <property type="molecule type" value="Genomic_DNA"/>
</dbReference>
<dbReference type="EMBL" id="CP002684">
    <property type="protein sequence ID" value="AEE28270.1"/>
    <property type="molecule type" value="Genomic_DNA"/>
</dbReference>
<dbReference type="EMBL" id="AK118851">
    <property type="protein sequence ID" value="BAC43439.1"/>
    <property type="molecule type" value="mRNA"/>
</dbReference>
<dbReference type="EMBL" id="AY090918">
    <property type="protein sequence ID" value="AAM13913.1"/>
    <property type="molecule type" value="mRNA"/>
</dbReference>
<dbReference type="RefSeq" id="NP_172306.1">
    <property type="nucleotide sequence ID" value="NM_100702.4"/>
</dbReference>
<dbReference type="BioGRID" id="22590">
    <property type="interactions" value="8"/>
</dbReference>
<dbReference type="FunCoup" id="Q9SGD1">
    <property type="interactions" value="11"/>
</dbReference>
<dbReference type="IntAct" id="Q9SGD1">
    <property type="interactions" value="3"/>
</dbReference>
<dbReference type="STRING" id="3702.Q9SGD1"/>
<dbReference type="PaxDb" id="3702-AT1G08290.1"/>
<dbReference type="ProteomicsDB" id="242951"/>
<dbReference type="EnsemblPlants" id="AT1G08290.1">
    <property type="protein sequence ID" value="AT1G08290.1"/>
    <property type="gene ID" value="AT1G08290"/>
</dbReference>
<dbReference type="GeneID" id="837349"/>
<dbReference type="Gramene" id="AT1G08290.1">
    <property type="protein sequence ID" value="AT1G08290.1"/>
    <property type="gene ID" value="AT1G08290"/>
</dbReference>
<dbReference type="KEGG" id="ath:AT1G08290"/>
<dbReference type="Araport" id="AT1G08290"/>
<dbReference type="TAIR" id="AT1G08290">
    <property type="gene designation" value="WIP3"/>
</dbReference>
<dbReference type="eggNOG" id="KOG1721">
    <property type="taxonomic scope" value="Eukaryota"/>
</dbReference>
<dbReference type="HOGENOM" id="CLU_052255_0_0_1"/>
<dbReference type="InParanoid" id="Q9SGD1"/>
<dbReference type="OMA" id="QIGFPKY"/>
<dbReference type="PhylomeDB" id="Q9SGD1"/>
<dbReference type="PRO" id="PR:Q9SGD1"/>
<dbReference type="Proteomes" id="UP000006548">
    <property type="component" value="Chromosome 1"/>
</dbReference>
<dbReference type="ExpressionAtlas" id="Q9SGD1">
    <property type="expression patterns" value="baseline and differential"/>
</dbReference>
<dbReference type="GO" id="GO:0005634">
    <property type="term" value="C:nucleus"/>
    <property type="evidence" value="ECO:0000314"/>
    <property type="project" value="TAIR"/>
</dbReference>
<dbReference type="GO" id="GO:0003700">
    <property type="term" value="F:DNA-binding transcription factor activity"/>
    <property type="evidence" value="ECO:0000250"/>
    <property type="project" value="TAIR"/>
</dbReference>
<dbReference type="GO" id="GO:0008270">
    <property type="term" value="F:zinc ion binding"/>
    <property type="evidence" value="ECO:0007669"/>
    <property type="project" value="UniProtKB-KW"/>
</dbReference>
<dbReference type="GO" id="GO:0006355">
    <property type="term" value="P:regulation of DNA-templated transcription"/>
    <property type="evidence" value="ECO:0000304"/>
    <property type="project" value="TAIR"/>
</dbReference>
<dbReference type="FunFam" id="3.30.160.60:FF:000523">
    <property type="entry name" value="Zinc finger protein WIP2"/>
    <property type="match status" value="1"/>
</dbReference>
<dbReference type="Gene3D" id="3.30.160.60">
    <property type="entry name" value="Classic Zinc Finger"/>
    <property type="match status" value="2"/>
</dbReference>
<dbReference type="InterPro" id="IPR055187">
    <property type="entry name" value="C2CH-3rd_BIRD-IDD"/>
</dbReference>
<dbReference type="InterPro" id="IPR043584">
    <property type="entry name" value="WIP1/2/3/4/5/6"/>
</dbReference>
<dbReference type="InterPro" id="IPR036236">
    <property type="entry name" value="Znf_C2H2_sf"/>
</dbReference>
<dbReference type="InterPro" id="IPR013087">
    <property type="entry name" value="Znf_C2H2_type"/>
</dbReference>
<dbReference type="PANTHER" id="PTHR45878">
    <property type="entry name" value="ZINC FINGER PROTEIN WIP2"/>
    <property type="match status" value="1"/>
</dbReference>
<dbReference type="PANTHER" id="PTHR45878:SF23">
    <property type="entry name" value="ZINC FINGER PROTEIN WIP3"/>
    <property type="match status" value="1"/>
</dbReference>
<dbReference type="Pfam" id="PF22995">
    <property type="entry name" value="C2CH-3rd_BIRD-IDD"/>
    <property type="match status" value="1"/>
</dbReference>
<dbReference type="Pfam" id="PF00096">
    <property type="entry name" value="zf-C2H2"/>
    <property type="match status" value="1"/>
</dbReference>
<dbReference type="Pfam" id="PF23115">
    <property type="entry name" value="zf-C2H2_STOP2_3rd"/>
    <property type="match status" value="1"/>
</dbReference>
<dbReference type="SMART" id="SM00355">
    <property type="entry name" value="ZnF_C2H2"/>
    <property type="match status" value="3"/>
</dbReference>
<dbReference type="SUPFAM" id="SSF57667">
    <property type="entry name" value="beta-beta-alpha zinc fingers"/>
    <property type="match status" value="2"/>
</dbReference>
<dbReference type="PROSITE" id="PS00028">
    <property type="entry name" value="ZINC_FINGER_C2H2_1"/>
    <property type="match status" value="1"/>
</dbReference>
<dbReference type="PROSITE" id="PS50157">
    <property type="entry name" value="ZINC_FINGER_C2H2_2"/>
    <property type="match status" value="2"/>
</dbReference>
<protein>
    <recommendedName>
        <fullName>Zinc finger protein WIP3</fullName>
    </recommendedName>
    <alternativeName>
        <fullName evidence="4">WIP-domain protein 3</fullName>
        <shortName evidence="4">AtWIP3</shortName>
    </alternativeName>
</protein>